<accession>B0KBQ8</accession>
<organism>
    <name type="scientific">Thermoanaerobacter pseudethanolicus (strain ATCC 33223 / 39E)</name>
    <name type="common">Clostridium thermohydrosulfuricum</name>
    <dbReference type="NCBI Taxonomy" id="340099"/>
    <lineage>
        <taxon>Bacteria</taxon>
        <taxon>Bacillati</taxon>
        <taxon>Bacillota</taxon>
        <taxon>Clostridia</taxon>
        <taxon>Thermoanaerobacterales</taxon>
        <taxon>Thermoanaerobacteraceae</taxon>
        <taxon>Thermoanaerobacter</taxon>
    </lineage>
</organism>
<comment type="catalytic activity">
    <reaction evidence="1">
        <text>5-amino-1-(5-phospho-D-ribosyl)imidazole-4-carboxylate + L-aspartate + ATP = (2S)-2-[5-amino-1-(5-phospho-beta-D-ribosyl)imidazole-4-carboxamido]succinate + ADP + phosphate + 2 H(+)</text>
        <dbReference type="Rhea" id="RHEA:22628"/>
        <dbReference type="ChEBI" id="CHEBI:15378"/>
        <dbReference type="ChEBI" id="CHEBI:29991"/>
        <dbReference type="ChEBI" id="CHEBI:30616"/>
        <dbReference type="ChEBI" id="CHEBI:43474"/>
        <dbReference type="ChEBI" id="CHEBI:58443"/>
        <dbReference type="ChEBI" id="CHEBI:77657"/>
        <dbReference type="ChEBI" id="CHEBI:456216"/>
        <dbReference type="EC" id="6.3.2.6"/>
    </reaction>
</comment>
<comment type="pathway">
    <text evidence="1">Purine metabolism; IMP biosynthesis via de novo pathway; 5-amino-1-(5-phospho-D-ribosyl)imidazole-4-carboxamide from 5-amino-1-(5-phospho-D-ribosyl)imidazole-4-carboxylate: step 1/2.</text>
</comment>
<comment type="similarity">
    <text evidence="1">Belongs to the SAICAR synthetase family.</text>
</comment>
<dbReference type="EC" id="6.3.2.6" evidence="1"/>
<dbReference type="EMBL" id="CP000924">
    <property type="protein sequence ID" value="ABY95353.1"/>
    <property type="molecule type" value="Genomic_DNA"/>
</dbReference>
<dbReference type="RefSeq" id="WP_003866811.1">
    <property type="nucleotide sequence ID" value="NC_010321.1"/>
</dbReference>
<dbReference type="SMR" id="B0KBQ8"/>
<dbReference type="STRING" id="340099.Teth39_1716"/>
<dbReference type="KEGG" id="tpd:Teth39_1716"/>
<dbReference type="eggNOG" id="COG0152">
    <property type="taxonomic scope" value="Bacteria"/>
</dbReference>
<dbReference type="HOGENOM" id="CLU_061495_2_0_9"/>
<dbReference type="UniPathway" id="UPA00074">
    <property type="reaction ID" value="UER00131"/>
</dbReference>
<dbReference type="Proteomes" id="UP000002156">
    <property type="component" value="Chromosome"/>
</dbReference>
<dbReference type="GO" id="GO:0005524">
    <property type="term" value="F:ATP binding"/>
    <property type="evidence" value="ECO:0007669"/>
    <property type="project" value="UniProtKB-KW"/>
</dbReference>
<dbReference type="GO" id="GO:0004639">
    <property type="term" value="F:phosphoribosylaminoimidazolesuccinocarboxamide synthase activity"/>
    <property type="evidence" value="ECO:0007669"/>
    <property type="project" value="UniProtKB-UniRule"/>
</dbReference>
<dbReference type="GO" id="GO:0006189">
    <property type="term" value="P:'de novo' IMP biosynthetic process"/>
    <property type="evidence" value="ECO:0007669"/>
    <property type="project" value="UniProtKB-UniRule"/>
</dbReference>
<dbReference type="GO" id="GO:0009236">
    <property type="term" value="P:cobalamin biosynthetic process"/>
    <property type="evidence" value="ECO:0007669"/>
    <property type="project" value="InterPro"/>
</dbReference>
<dbReference type="CDD" id="cd01415">
    <property type="entry name" value="SAICAR_synt_PurC"/>
    <property type="match status" value="1"/>
</dbReference>
<dbReference type="FunFam" id="3.30.470.20:FF:000006">
    <property type="entry name" value="Phosphoribosylaminoimidazole-succinocarboxamide synthase"/>
    <property type="match status" value="1"/>
</dbReference>
<dbReference type="Gene3D" id="3.30.470.20">
    <property type="entry name" value="ATP-grasp fold, B domain"/>
    <property type="match status" value="1"/>
</dbReference>
<dbReference type="Gene3D" id="3.30.200.20">
    <property type="entry name" value="Phosphorylase Kinase, domain 1"/>
    <property type="match status" value="1"/>
</dbReference>
<dbReference type="HAMAP" id="MF_00137">
    <property type="entry name" value="SAICAR_synth"/>
    <property type="match status" value="1"/>
</dbReference>
<dbReference type="InterPro" id="IPR028923">
    <property type="entry name" value="SAICAR_synt/ADE2_N"/>
</dbReference>
<dbReference type="InterPro" id="IPR033934">
    <property type="entry name" value="SAICAR_synt_PurC"/>
</dbReference>
<dbReference type="InterPro" id="IPR001636">
    <property type="entry name" value="SAICAR_synth"/>
</dbReference>
<dbReference type="InterPro" id="IPR050089">
    <property type="entry name" value="SAICAR_synthetase"/>
</dbReference>
<dbReference type="InterPro" id="IPR018236">
    <property type="entry name" value="SAICAR_synthetase_CS"/>
</dbReference>
<dbReference type="NCBIfam" id="TIGR00081">
    <property type="entry name" value="purC"/>
    <property type="match status" value="1"/>
</dbReference>
<dbReference type="PANTHER" id="PTHR43599">
    <property type="entry name" value="MULTIFUNCTIONAL PROTEIN ADE2"/>
    <property type="match status" value="1"/>
</dbReference>
<dbReference type="PANTHER" id="PTHR43599:SF3">
    <property type="entry name" value="SI:DKEY-6E2.2"/>
    <property type="match status" value="1"/>
</dbReference>
<dbReference type="Pfam" id="PF01259">
    <property type="entry name" value="SAICAR_synt"/>
    <property type="match status" value="1"/>
</dbReference>
<dbReference type="SUPFAM" id="SSF56104">
    <property type="entry name" value="SAICAR synthase-like"/>
    <property type="match status" value="1"/>
</dbReference>
<dbReference type="PROSITE" id="PS01057">
    <property type="entry name" value="SAICAR_SYNTHETASE_1"/>
    <property type="match status" value="1"/>
</dbReference>
<dbReference type="PROSITE" id="PS01058">
    <property type="entry name" value="SAICAR_SYNTHETASE_2"/>
    <property type="match status" value="1"/>
</dbReference>
<name>PUR7_THEP3</name>
<keyword id="KW-0067">ATP-binding</keyword>
<keyword id="KW-0436">Ligase</keyword>
<keyword id="KW-0547">Nucleotide-binding</keyword>
<keyword id="KW-0658">Purine biosynthesis</keyword>
<keyword id="KW-1185">Reference proteome</keyword>
<gene>
    <name evidence="1" type="primary">purC</name>
    <name type="ordered locus">Teth39_1716</name>
</gene>
<sequence length="235" mass="27199">MEKRELLYEGKAKKVYKTDEENLYIIEYKDDATAFNGLKKGTIAEKGIVNNKVSAILFALLDKNNVPTHYVKRLSDREMLVKKVEIFPLEVIVRNYAAGSICKRLGLEEGLKFKTPVLEFSYKNDELKDPMINEYHIQALELATKEEIEIMTGMTFKVNEILSEYFLSKDIILVDFKLEFGKSSEGILLADEISPDTCRFWDKNTMEKLDKDRFRKDLGKVEEAYLEILKRLGGM</sequence>
<protein>
    <recommendedName>
        <fullName evidence="1">Phosphoribosylaminoimidazole-succinocarboxamide synthase</fullName>
        <ecNumber evidence="1">6.3.2.6</ecNumber>
    </recommendedName>
    <alternativeName>
        <fullName evidence="1">SAICAR synthetase</fullName>
    </alternativeName>
</protein>
<reference key="1">
    <citation type="submission" date="2008-01" db="EMBL/GenBank/DDBJ databases">
        <title>Complete sequence of Thermoanaerobacter pseudethanolicus 39E.</title>
        <authorList>
            <person name="Copeland A."/>
            <person name="Lucas S."/>
            <person name="Lapidus A."/>
            <person name="Barry K."/>
            <person name="Glavina del Rio T."/>
            <person name="Dalin E."/>
            <person name="Tice H."/>
            <person name="Pitluck S."/>
            <person name="Bruce D."/>
            <person name="Goodwin L."/>
            <person name="Saunders E."/>
            <person name="Brettin T."/>
            <person name="Detter J.C."/>
            <person name="Han C."/>
            <person name="Schmutz J."/>
            <person name="Larimer F."/>
            <person name="Land M."/>
            <person name="Hauser L."/>
            <person name="Kyrpides N."/>
            <person name="Lykidis A."/>
            <person name="Hemme C."/>
            <person name="Fields M.W."/>
            <person name="He Z."/>
            <person name="Zhou J."/>
            <person name="Richardson P."/>
        </authorList>
    </citation>
    <scope>NUCLEOTIDE SEQUENCE [LARGE SCALE GENOMIC DNA]</scope>
    <source>
        <strain>ATCC 33223 / DSM 2355 / 39E</strain>
    </source>
</reference>
<proteinExistence type="inferred from homology"/>
<feature type="chain" id="PRO_1000096023" description="Phosphoribosylaminoimidazole-succinocarboxamide synthase">
    <location>
        <begin position="1"/>
        <end position="235"/>
    </location>
</feature>
<evidence type="ECO:0000255" key="1">
    <source>
        <dbReference type="HAMAP-Rule" id="MF_00137"/>
    </source>
</evidence>